<protein>
    <recommendedName>
        <fullName>F-box protein At3g26010</fullName>
    </recommendedName>
</protein>
<reference key="1">
    <citation type="journal article" date="2000" name="DNA Res.">
        <title>Structural analysis of Arabidopsis thaliana chromosome 3. I. Sequence features of the regions of 4,504,864 bp covered by sixty P1 and TAC clones.</title>
        <authorList>
            <person name="Sato S."/>
            <person name="Nakamura Y."/>
            <person name="Kaneko T."/>
            <person name="Katoh T."/>
            <person name="Asamizu E."/>
            <person name="Tabata S."/>
        </authorList>
    </citation>
    <scope>NUCLEOTIDE SEQUENCE [LARGE SCALE GENOMIC DNA]</scope>
    <source>
        <strain>cv. Columbia</strain>
    </source>
</reference>
<reference key="2">
    <citation type="journal article" date="2017" name="Plant J.">
        <title>Araport11: a complete reannotation of the Arabidopsis thaliana reference genome.</title>
        <authorList>
            <person name="Cheng C.Y."/>
            <person name="Krishnakumar V."/>
            <person name="Chan A.P."/>
            <person name="Thibaud-Nissen F."/>
            <person name="Schobel S."/>
            <person name="Town C.D."/>
        </authorList>
    </citation>
    <scope>GENOME REANNOTATION</scope>
    <source>
        <strain>cv. Columbia</strain>
    </source>
</reference>
<reference key="3">
    <citation type="journal article" date="2006" name="Plant Biotechnol. J.">
        <title>Simultaneous high-throughput recombinational cloning of open reading frames in closed and open configurations.</title>
        <authorList>
            <person name="Underwood B.A."/>
            <person name="Vanderhaeghen R."/>
            <person name="Whitford R."/>
            <person name="Town C.D."/>
            <person name="Hilson P."/>
        </authorList>
    </citation>
    <scope>NUCLEOTIDE SEQUENCE [LARGE SCALE MRNA]</scope>
    <source>
        <strain>cv. Columbia</strain>
    </source>
</reference>
<proteinExistence type="evidence at transcript level"/>
<feature type="chain" id="PRO_0000283458" description="F-box protein At3g26010">
    <location>
        <begin position="1"/>
        <end position="414"/>
    </location>
</feature>
<feature type="domain" description="F-box">
    <location>
        <begin position="5"/>
        <end position="52"/>
    </location>
</feature>
<sequence>METRNRTIHLTDAIWTEILARLPLRIIARFKSVSKTWKSTIESVYFRRLFVSVHRKSSTSWSLMWYGQKDLVGFHGCETWGLPKSLSFYIPSSLCIIEGSSHGLVLISENDDDCCFVGNPVLQQWIKIPPPPVHSSVFGLVSRVDDDGFVLGFKVVKLAEVIVTNNYVSCSLSVFVYSSETGIWTCKTIHCPYQITNFGSFTLDGTIYFDHLSEPGVLVAYDFYSEISDQFWVIPLPDHPNHGFNSDFKGALTTSQGFVMYIRTLAQSSSNVFKAWRLNNDSTWQLLWKIGLPSLIGDYVPMAMHPFDSDIVHLWSQDHRHVVSWNLRTQKNRILGAEDNDEDHKDCYLNQPVCEECMDEICGCKASVRLLQLVLPRWMESVPCPPQVEMMNTASVISYVTSMQETMIRNWLHQ</sequence>
<organism>
    <name type="scientific">Arabidopsis thaliana</name>
    <name type="common">Mouse-ear cress</name>
    <dbReference type="NCBI Taxonomy" id="3702"/>
    <lineage>
        <taxon>Eukaryota</taxon>
        <taxon>Viridiplantae</taxon>
        <taxon>Streptophyta</taxon>
        <taxon>Embryophyta</taxon>
        <taxon>Tracheophyta</taxon>
        <taxon>Spermatophyta</taxon>
        <taxon>Magnoliopsida</taxon>
        <taxon>eudicotyledons</taxon>
        <taxon>Gunneridae</taxon>
        <taxon>Pentapetalae</taxon>
        <taxon>rosids</taxon>
        <taxon>malvids</taxon>
        <taxon>Brassicales</taxon>
        <taxon>Brassicaceae</taxon>
        <taxon>Camelineae</taxon>
        <taxon>Arabidopsis</taxon>
    </lineage>
</organism>
<name>FB188_ARATH</name>
<keyword id="KW-1185">Reference proteome</keyword>
<accession>Q9LU90</accession>
<dbReference type="EMBL" id="AB023041">
    <property type="protein sequence ID" value="BAB01064.1"/>
    <property type="molecule type" value="Genomic_DNA"/>
</dbReference>
<dbReference type="EMBL" id="CP002686">
    <property type="protein sequence ID" value="AEE77101.1"/>
    <property type="molecule type" value="Genomic_DNA"/>
</dbReference>
<dbReference type="EMBL" id="DQ446701">
    <property type="protein sequence ID" value="ABE65969.1"/>
    <property type="molecule type" value="mRNA"/>
</dbReference>
<dbReference type="RefSeq" id="NP_189230.1">
    <property type="nucleotide sequence ID" value="NM_113505.2"/>
</dbReference>
<dbReference type="SMR" id="Q9LU90"/>
<dbReference type="BioGRID" id="7529">
    <property type="interactions" value="10"/>
</dbReference>
<dbReference type="FunCoup" id="Q9LU90">
    <property type="interactions" value="136"/>
</dbReference>
<dbReference type="STRING" id="3702.Q9LU90"/>
<dbReference type="iPTMnet" id="Q9LU90"/>
<dbReference type="PaxDb" id="3702-AT3G26010.1"/>
<dbReference type="ProteomicsDB" id="230964"/>
<dbReference type="EnsemblPlants" id="AT3G26010.1">
    <property type="protein sequence ID" value="AT3G26010.1"/>
    <property type="gene ID" value="AT3G26010"/>
</dbReference>
<dbReference type="GeneID" id="822198"/>
<dbReference type="Gramene" id="AT3G26010.1">
    <property type="protein sequence ID" value="AT3G26010.1"/>
    <property type="gene ID" value="AT3G26010"/>
</dbReference>
<dbReference type="KEGG" id="ath:AT3G26010"/>
<dbReference type="Araport" id="AT3G26010"/>
<dbReference type="TAIR" id="AT3G26010"/>
<dbReference type="HOGENOM" id="CLU_029240_1_0_1"/>
<dbReference type="InParanoid" id="Q9LU90"/>
<dbReference type="OMA" id="ECMDEIC"/>
<dbReference type="PhylomeDB" id="Q9LU90"/>
<dbReference type="PRO" id="PR:Q9LU90"/>
<dbReference type="Proteomes" id="UP000006548">
    <property type="component" value="Chromosome 3"/>
</dbReference>
<dbReference type="ExpressionAtlas" id="Q9LU90">
    <property type="expression patterns" value="baseline and differential"/>
</dbReference>
<dbReference type="InterPro" id="IPR055290">
    <property type="entry name" value="At3g26010-like"/>
</dbReference>
<dbReference type="InterPro" id="IPR056592">
    <property type="entry name" value="At3g26010-like_b-prop"/>
</dbReference>
<dbReference type="InterPro" id="IPR036047">
    <property type="entry name" value="F-box-like_dom_sf"/>
</dbReference>
<dbReference type="InterPro" id="IPR001810">
    <property type="entry name" value="F-box_dom"/>
</dbReference>
<dbReference type="InterPro" id="IPR011043">
    <property type="entry name" value="Gal_Oxase/kelch_b-propeller"/>
</dbReference>
<dbReference type="PANTHER" id="PTHR35546:SF25">
    <property type="entry name" value="F-BOX DOMAIN-CONTAINING PROTEIN"/>
    <property type="match status" value="1"/>
</dbReference>
<dbReference type="PANTHER" id="PTHR35546">
    <property type="entry name" value="F-BOX PROTEIN INTERACTION DOMAIN PROTEIN-RELATED"/>
    <property type="match status" value="1"/>
</dbReference>
<dbReference type="Pfam" id="PF24750">
    <property type="entry name" value="b-prop_At3g26010-like"/>
    <property type="match status" value="1"/>
</dbReference>
<dbReference type="Pfam" id="PF00646">
    <property type="entry name" value="F-box"/>
    <property type="match status" value="1"/>
</dbReference>
<dbReference type="SMART" id="SM00256">
    <property type="entry name" value="FBOX"/>
    <property type="match status" value="1"/>
</dbReference>
<dbReference type="SUPFAM" id="SSF81383">
    <property type="entry name" value="F-box domain"/>
    <property type="match status" value="1"/>
</dbReference>
<dbReference type="SUPFAM" id="SSF50965">
    <property type="entry name" value="Galactose oxidase, central domain"/>
    <property type="match status" value="1"/>
</dbReference>
<gene>
    <name type="ordered locus">At3g26010</name>
    <name type="ORF">MPE11.18</name>
</gene>